<gene>
    <name evidence="1" type="primary">mrdA</name>
    <name type="synonym">pbpA</name>
    <name type="ordered locus">SL1344_1845</name>
</gene>
<organism>
    <name type="scientific">Salmonella typhimurium (strain SL1344)</name>
    <dbReference type="NCBI Taxonomy" id="216597"/>
    <lineage>
        <taxon>Bacteria</taxon>
        <taxon>Pseudomonadati</taxon>
        <taxon>Pseudomonadota</taxon>
        <taxon>Gammaproteobacteria</taxon>
        <taxon>Enterobacterales</taxon>
        <taxon>Enterobacteriaceae</taxon>
        <taxon>Salmonella</taxon>
    </lineage>
</organism>
<evidence type="ECO:0000255" key="1">
    <source>
        <dbReference type="HAMAP-Rule" id="MF_02081"/>
    </source>
</evidence>
<evidence type="ECO:0000305" key="2"/>
<comment type="function">
    <text evidence="1">Catalyzes cross-linking of the peptidoglycan cell wall.</text>
</comment>
<comment type="catalytic activity">
    <reaction evidence="1">
        <text>Preferential cleavage: (Ac)2-L-Lys-D-Ala-|-D-Ala. Also transpeptidation of peptidyl-alanyl moieties that are N-acyl substituents of D-alanine.</text>
        <dbReference type="EC" id="3.4.16.4"/>
    </reaction>
</comment>
<comment type="pathway">
    <text evidence="1">Cell wall biogenesis; peptidoglycan biosynthesis.</text>
</comment>
<comment type="subcellular location">
    <subcellularLocation>
        <location evidence="1">Cell inner membrane</location>
        <topology evidence="1">Single-pass membrane protein</topology>
    </subcellularLocation>
</comment>
<comment type="similarity">
    <text evidence="1">Belongs to the transpeptidase family. MrdA subfamily.</text>
</comment>
<proteinExistence type="inferred from homology"/>
<dbReference type="EC" id="3.4.16.4" evidence="1"/>
<dbReference type="EMBL" id="FQ312003">
    <property type="protein sequence ID" value="CBW17939.1"/>
    <property type="molecule type" value="Genomic_DNA"/>
</dbReference>
<dbReference type="EMBL" id="U62714">
    <property type="protein sequence ID" value="AAC44611.1"/>
    <property type="molecule type" value="Genomic_DNA"/>
</dbReference>
<dbReference type="RefSeq" id="WP_000142877.1">
    <property type="nucleotide sequence ID" value="NZ_QASL01000015.1"/>
</dbReference>
<dbReference type="SMR" id="E1WGF1"/>
<dbReference type="KEGG" id="sey:SL1344_1845"/>
<dbReference type="PATRIC" id="fig|216597.6.peg.2048"/>
<dbReference type="HOGENOM" id="CLU_009289_1_2_6"/>
<dbReference type="BioCyc" id="SENT216597:SL1344_RS09555-MONOMER"/>
<dbReference type="UniPathway" id="UPA00219"/>
<dbReference type="Proteomes" id="UP000008962">
    <property type="component" value="Chromosome"/>
</dbReference>
<dbReference type="GO" id="GO:0005886">
    <property type="term" value="C:plasma membrane"/>
    <property type="evidence" value="ECO:0007669"/>
    <property type="project" value="UniProtKB-SubCell"/>
</dbReference>
<dbReference type="GO" id="GO:0008658">
    <property type="term" value="F:penicillin binding"/>
    <property type="evidence" value="ECO:0007669"/>
    <property type="project" value="InterPro"/>
</dbReference>
<dbReference type="GO" id="GO:0071972">
    <property type="term" value="F:peptidoglycan L,D-transpeptidase activity"/>
    <property type="evidence" value="ECO:0007669"/>
    <property type="project" value="TreeGrafter"/>
</dbReference>
<dbReference type="GO" id="GO:0009002">
    <property type="term" value="F:serine-type D-Ala-D-Ala carboxypeptidase activity"/>
    <property type="evidence" value="ECO:0007669"/>
    <property type="project" value="UniProtKB-UniRule"/>
</dbReference>
<dbReference type="GO" id="GO:0071555">
    <property type="term" value="P:cell wall organization"/>
    <property type="evidence" value="ECO:0007669"/>
    <property type="project" value="UniProtKB-KW"/>
</dbReference>
<dbReference type="GO" id="GO:0009252">
    <property type="term" value="P:peptidoglycan biosynthetic process"/>
    <property type="evidence" value="ECO:0007669"/>
    <property type="project" value="UniProtKB-UniRule"/>
</dbReference>
<dbReference type="GO" id="GO:0006508">
    <property type="term" value="P:proteolysis"/>
    <property type="evidence" value="ECO:0007669"/>
    <property type="project" value="UniProtKB-KW"/>
</dbReference>
<dbReference type="GO" id="GO:0008360">
    <property type="term" value="P:regulation of cell shape"/>
    <property type="evidence" value="ECO:0007669"/>
    <property type="project" value="UniProtKB-KW"/>
</dbReference>
<dbReference type="FunFam" id="3.40.710.10:FF:000004">
    <property type="entry name" value="Peptidoglycan D,D-transpeptidase MrdA"/>
    <property type="match status" value="1"/>
</dbReference>
<dbReference type="FunFam" id="3.90.1310.10:FF:000001">
    <property type="entry name" value="Peptidoglycan D,D-transpeptidase MrdA"/>
    <property type="match status" value="1"/>
</dbReference>
<dbReference type="Gene3D" id="3.40.710.10">
    <property type="entry name" value="DD-peptidase/beta-lactamase superfamily"/>
    <property type="match status" value="1"/>
</dbReference>
<dbReference type="Gene3D" id="3.90.1310.10">
    <property type="entry name" value="Penicillin-binding protein 2a (Domain 2)"/>
    <property type="match status" value="1"/>
</dbReference>
<dbReference type="Gene3D" id="3.30.1390.30">
    <property type="entry name" value="Penicillin-binding protein 2a, domain 3"/>
    <property type="match status" value="1"/>
</dbReference>
<dbReference type="HAMAP" id="MF_02081">
    <property type="entry name" value="MrdA_transpept"/>
    <property type="match status" value="1"/>
</dbReference>
<dbReference type="InterPro" id="IPR050515">
    <property type="entry name" value="Bact_Transpept/Beta-Lactamase"/>
</dbReference>
<dbReference type="InterPro" id="IPR012338">
    <property type="entry name" value="Beta-lactam/transpept-like"/>
</dbReference>
<dbReference type="InterPro" id="IPR005311">
    <property type="entry name" value="PBP_dimer"/>
</dbReference>
<dbReference type="InterPro" id="IPR036138">
    <property type="entry name" value="PBP_dimer_sf"/>
</dbReference>
<dbReference type="InterPro" id="IPR001460">
    <property type="entry name" value="PCN-bd_Tpept"/>
</dbReference>
<dbReference type="InterPro" id="IPR017790">
    <property type="entry name" value="Penicillin-binding_protein_2"/>
</dbReference>
<dbReference type="NCBIfam" id="TIGR03423">
    <property type="entry name" value="pbp2_mrdA"/>
    <property type="match status" value="1"/>
</dbReference>
<dbReference type="PANTHER" id="PTHR30627">
    <property type="entry name" value="PEPTIDOGLYCAN D,D-TRANSPEPTIDASE"/>
    <property type="match status" value="1"/>
</dbReference>
<dbReference type="PANTHER" id="PTHR30627:SF2">
    <property type="entry name" value="PEPTIDOGLYCAN D,D-TRANSPEPTIDASE MRDA"/>
    <property type="match status" value="1"/>
</dbReference>
<dbReference type="Pfam" id="PF03717">
    <property type="entry name" value="PBP_dimer"/>
    <property type="match status" value="1"/>
</dbReference>
<dbReference type="Pfam" id="PF00905">
    <property type="entry name" value="Transpeptidase"/>
    <property type="match status" value="1"/>
</dbReference>
<dbReference type="SUPFAM" id="SSF56601">
    <property type="entry name" value="beta-lactamase/transpeptidase-like"/>
    <property type="match status" value="1"/>
</dbReference>
<dbReference type="SUPFAM" id="SSF56519">
    <property type="entry name" value="Penicillin binding protein dimerisation domain"/>
    <property type="match status" value="1"/>
</dbReference>
<accession>E1WGF1</accession>
<accession>P74872</accession>
<keyword id="KW-0121">Carboxypeptidase</keyword>
<keyword id="KW-0997">Cell inner membrane</keyword>
<keyword id="KW-1003">Cell membrane</keyword>
<keyword id="KW-0133">Cell shape</keyword>
<keyword id="KW-0961">Cell wall biogenesis/degradation</keyword>
<keyword id="KW-0378">Hydrolase</keyword>
<keyword id="KW-0472">Membrane</keyword>
<keyword id="KW-0573">Peptidoglycan synthesis</keyword>
<keyword id="KW-0645">Protease</keyword>
<keyword id="KW-0812">Transmembrane</keyword>
<keyword id="KW-1133">Transmembrane helix</keyword>
<feature type="chain" id="PRO_0000405425" description="Peptidoglycan D,D-transpeptidase MrdA">
    <location>
        <begin position="1"/>
        <end position="623"/>
    </location>
</feature>
<feature type="transmembrane region" description="Helical" evidence="1">
    <location>
        <begin position="17"/>
        <end position="37"/>
    </location>
</feature>
<feature type="active site" description="Acyl-ester intermediate" evidence="1">
    <location>
        <position position="326"/>
    </location>
</feature>
<feature type="sequence conflict" description="In Ref. 2; AAC44611." evidence="2" ref="2">
    <original>P</original>
    <variation>A</variation>
    <location>
        <position position="62"/>
    </location>
</feature>
<feature type="sequence conflict" description="In Ref. 2; AAC44611." evidence="2" ref="2">
    <original>P</original>
    <variation>R</variation>
    <location>
        <position position="103"/>
    </location>
</feature>
<sequence>MTFKDFDAEEKLFLRRVIVAFGVVVVCFGILIFNLYNLQIRQHHYYTTRSNENDIKMLPVAPTRGIIYDRNGIPLVRNVTWYDIAVTPYKIADMDALLKQLTPIVDLSPDDISDFRRALKSSSRYRPVVLKNALTDVEIARFAVNQFHFNGVTINSYQDRQYPYGAELAHVLGYVSKINDNDLKALDKKGLAENYAADHNIGKQGIERYYENDLHGKTGYQEVEVDNHGRIVRLLKDVPPIAGKNIHLTLDLHLQEYIESLLAGQRAAVLVEDPHDGSVLAMVSMPSYDPNPFVKGISYQDYGKLLHDKNLPLINRVTQGLYPPASTVKPYMAMSALLCGIITPQTTFFGAPTWTLPGTQRHYRDWKKTGHGMLDVTKAIEESADTFFYQVAYMMGIDRIDTMLSQFGYGKPTGIDLNEEYDGLLPSRAWKQRVHKKAWYQGDTISVGIGQGYWIATPIQMVKAMVALINNGKVIAPHLLLNEESGKTVVPYRPSGTPAQIADPASPYWGLVRQAMYGMANAPNGTGYKFFHTAPYGIAAKSGTSQVFSLKENQTYNAKMIPIRLRDHVFYTAFAPYKNPKVAIALILENGGSDGVTAAPIMRKILDHLFDPQADTTQPDQAP</sequence>
<name>MRDA_SALTS</name>
<protein>
    <recommendedName>
        <fullName evidence="1">Peptidoglycan D,D-transpeptidase MrdA</fullName>
        <ecNumber evidence="1">3.4.16.4</ecNumber>
    </recommendedName>
    <alternativeName>
        <fullName evidence="1">Penicillin-binding protein 2</fullName>
        <shortName evidence="1">PBP-2</shortName>
    </alternativeName>
</protein>
<reference key="1">
    <citation type="journal article" date="2012" name="Proc. Natl. Acad. Sci. U.S.A.">
        <title>The transcriptional landscape and small RNAs of Salmonella enterica serovar Typhimurium.</title>
        <authorList>
            <person name="Kroger C."/>
            <person name="Dillon S.C."/>
            <person name="Cameron A.D."/>
            <person name="Papenfort K."/>
            <person name="Sivasankaran S.K."/>
            <person name="Hokamp K."/>
            <person name="Chao Y."/>
            <person name="Sittka A."/>
            <person name="Hebrard M."/>
            <person name="Handler K."/>
            <person name="Colgan A."/>
            <person name="Leekitcharoenphon P."/>
            <person name="Langridge G.C."/>
            <person name="Lohan A.J."/>
            <person name="Loftus B."/>
            <person name="Lucchini S."/>
            <person name="Ussery D.W."/>
            <person name="Dorman C.J."/>
            <person name="Thomson N.R."/>
            <person name="Vogel J."/>
            <person name="Hinton J.C."/>
        </authorList>
    </citation>
    <scope>NUCLEOTIDE SEQUENCE [LARGE SCALE GENOMIC DNA]</scope>
    <source>
        <strain>SL1344</strain>
    </source>
</reference>
<reference key="2">
    <citation type="journal article" date="1996" name="Mol. Microbiol.">
        <title>Bacterial genetics by flow cytometry: rapid isolation of Salmonella typhimurium acid-inducible promoters by differential fluorescence induction.</title>
        <authorList>
            <person name="Valdivia R.H."/>
            <person name="Falkow S."/>
        </authorList>
    </citation>
    <scope>NUCLEOTIDE SEQUENCE [GENOMIC DNA] OF 1-106</scope>
    <source>
        <strain>SL1344</strain>
    </source>
</reference>